<name>RS18_KORVE</name>
<evidence type="ECO:0000255" key="1">
    <source>
        <dbReference type="HAMAP-Rule" id="MF_00270"/>
    </source>
</evidence>
<evidence type="ECO:0000256" key="2">
    <source>
        <dbReference type="SAM" id="MobiDB-lite"/>
    </source>
</evidence>
<evidence type="ECO:0000305" key="3"/>
<dbReference type="EMBL" id="CP000360">
    <property type="protein sequence ID" value="ABF43536.1"/>
    <property type="molecule type" value="Genomic_DNA"/>
</dbReference>
<dbReference type="RefSeq" id="WP_011525333.1">
    <property type="nucleotide sequence ID" value="NC_008009.1"/>
</dbReference>
<dbReference type="SMR" id="Q1IHW4"/>
<dbReference type="STRING" id="204669.Acid345_4536"/>
<dbReference type="EnsemblBacteria" id="ABF43536">
    <property type="protein sequence ID" value="ABF43536"/>
    <property type="gene ID" value="Acid345_4536"/>
</dbReference>
<dbReference type="KEGG" id="aba:Acid345_4536"/>
<dbReference type="eggNOG" id="COG0238">
    <property type="taxonomic scope" value="Bacteria"/>
</dbReference>
<dbReference type="HOGENOM" id="CLU_148710_0_0_0"/>
<dbReference type="OrthoDB" id="9812008at2"/>
<dbReference type="Proteomes" id="UP000002432">
    <property type="component" value="Chromosome"/>
</dbReference>
<dbReference type="GO" id="GO:0022627">
    <property type="term" value="C:cytosolic small ribosomal subunit"/>
    <property type="evidence" value="ECO:0007669"/>
    <property type="project" value="TreeGrafter"/>
</dbReference>
<dbReference type="GO" id="GO:0070181">
    <property type="term" value="F:small ribosomal subunit rRNA binding"/>
    <property type="evidence" value="ECO:0007669"/>
    <property type="project" value="TreeGrafter"/>
</dbReference>
<dbReference type="GO" id="GO:0003735">
    <property type="term" value="F:structural constituent of ribosome"/>
    <property type="evidence" value="ECO:0007669"/>
    <property type="project" value="InterPro"/>
</dbReference>
<dbReference type="GO" id="GO:0006412">
    <property type="term" value="P:translation"/>
    <property type="evidence" value="ECO:0007669"/>
    <property type="project" value="UniProtKB-UniRule"/>
</dbReference>
<dbReference type="Gene3D" id="4.10.640.10">
    <property type="entry name" value="Ribosomal protein S18"/>
    <property type="match status" value="1"/>
</dbReference>
<dbReference type="HAMAP" id="MF_00270">
    <property type="entry name" value="Ribosomal_bS18"/>
    <property type="match status" value="1"/>
</dbReference>
<dbReference type="InterPro" id="IPR001648">
    <property type="entry name" value="Ribosomal_bS18"/>
</dbReference>
<dbReference type="InterPro" id="IPR036870">
    <property type="entry name" value="Ribosomal_bS18_sf"/>
</dbReference>
<dbReference type="NCBIfam" id="TIGR00165">
    <property type="entry name" value="S18"/>
    <property type="match status" value="1"/>
</dbReference>
<dbReference type="PANTHER" id="PTHR13479">
    <property type="entry name" value="30S RIBOSOMAL PROTEIN S18"/>
    <property type="match status" value="1"/>
</dbReference>
<dbReference type="PANTHER" id="PTHR13479:SF40">
    <property type="entry name" value="SMALL RIBOSOMAL SUBUNIT PROTEIN BS18M"/>
    <property type="match status" value="1"/>
</dbReference>
<dbReference type="Pfam" id="PF01084">
    <property type="entry name" value="Ribosomal_S18"/>
    <property type="match status" value="1"/>
</dbReference>
<dbReference type="PRINTS" id="PR00974">
    <property type="entry name" value="RIBOSOMALS18"/>
</dbReference>
<dbReference type="SUPFAM" id="SSF46911">
    <property type="entry name" value="Ribosomal protein S18"/>
    <property type="match status" value="1"/>
</dbReference>
<reference key="1">
    <citation type="journal article" date="2009" name="Appl. Environ. Microbiol.">
        <title>Three genomes from the phylum Acidobacteria provide insight into the lifestyles of these microorganisms in soils.</title>
        <authorList>
            <person name="Ward N.L."/>
            <person name="Challacombe J.F."/>
            <person name="Janssen P.H."/>
            <person name="Henrissat B."/>
            <person name="Coutinho P.M."/>
            <person name="Wu M."/>
            <person name="Xie G."/>
            <person name="Haft D.H."/>
            <person name="Sait M."/>
            <person name="Badger J."/>
            <person name="Barabote R.D."/>
            <person name="Bradley B."/>
            <person name="Brettin T.S."/>
            <person name="Brinkac L.M."/>
            <person name="Bruce D."/>
            <person name="Creasy T."/>
            <person name="Daugherty S.C."/>
            <person name="Davidsen T.M."/>
            <person name="DeBoy R.T."/>
            <person name="Detter J.C."/>
            <person name="Dodson R.J."/>
            <person name="Durkin A.S."/>
            <person name="Ganapathy A."/>
            <person name="Gwinn-Giglio M."/>
            <person name="Han C.S."/>
            <person name="Khouri H."/>
            <person name="Kiss H."/>
            <person name="Kothari S.P."/>
            <person name="Madupu R."/>
            <person name="Nelson K.E."/>
            <person name="Nelson W.C."/>
            <person name="Paulsen I."/>
            <person name="Penn K."/>
            <person name="Ren Q."/>
            <person name="Rosovitz M.J."/>
            <person name="Selengut J.D."/>
            <person name="Shrivastava S."/>
            <person name="Sullivan S.A."/>
            <person name="Tapia R."/>
            <person name="Thompson L.S."/>
            <person name="Watkins K.L."/>
            <person name="Yang Q."/>
            <person name="Yu C."/>
            <person name="Zafar N."/>
            <person name="Zhou L."/>
            <person name="Kuske C.R."/>
        </authorList>
    </citation>
    <scope>NUCLEOTIDE SEQUENCE [LARGE SCALE GENOMIC DNA]</scope>
    <source>
        <strain>Ellin345</strain>
    </source>
</reference>
<gene>
    <name evidence="1" type="primary">rpsR</name>
    <name type="ordered locus">Acid345_4536</name>
</gene>
<feature type="chain" id="PRO_0000345433" description="Small ribosomal subunit protein bS18">
    <location>
        <begin position="1"/>
        <end position="123"/>
    </location>
</feature>
<feature type="region of interest" description="Disordered" evidence="2">
    <location>
        <begin position="1"/>
        <end position="52"/>
    </location>
</feature>
<feature type="compositionally biased region" description="Polar residues" evidence="2">
    <location>
        <begin position="1"/>
        <end position="10"/>
    </location>
</feature>
<feature type="compositionally biased region" description="Gly residues" evidence="2">
    <location>
        <begin position="20"/>
        <end position="34"/>
    </location>
</feature>
<proteinExistence type="inferred from homology"/>
<protein>
    <recommendedName>
        <fullName evidence="1">Small ribosomal subunit protein bS18</fullName>
    </recommendedName>
    <alternativeName>
        <fullName evidence="3">30S ribosomal protein S18</fullName>
    </alternativeName>
</protein>
<keyword id="KW-1185">Reference proteome</keyword>
<keyword id="KW-0687">Ribonucleoprotein</keyword>
<keyword id="KW-0689">Ribosomal protein</keyword>
<keyword id="KW-0694">RNA-binding</keyword>
<keyword id="KW-0699">rRNA-binding</keyword>
<comment type="function">
    <text evidence="1">Binds as a heterodimer with protein bS6 to the central domain of the 16S rRNA, where it helps stabilize the platform of the 30S subunit.</text>
</comment>
<comment type="subunit">
    <text evidence="1">Part of the 30S ribosomal subunit. Forms a tight heterodimer with protein bS6.</text>
</comment>
<comment type="similarity">
    <text evidence="1">Belongs to the bacterial ribosomal protein bS18 family.</text>
</comment>
<sequence length="123" mass="13077">MADETTVSTPAASGTETPSTGGGGAPQGRPQGGPRGDRGPRPGGSGRDGGRKFFRRKKVCKFCVEKIDAIDYKDVRLLGQFVAESGKIVPRRLTGVCTPHQRRLSDAIKQARNIALLPFASAR</sequence>
<organism>
    <name type="scientific">Koribacter versatilis (strain Ellin345)</name>
    <dbReference type="NCBI Taxonomy" id="204669"/>
    <lineage>
        <taxon>Bacteria</taxon>
        <taxon>Pseudomonadati</taxon>
        <taxon>Acidobacteriota</taxon>
        <taxon>Terriglobia</taxon>
        <taxon>Terriglobales</taxon>
        <taxon>Candidatus Korobacteraceae</taxon>
        <taxon>Candidatus Korobacter</taxon>
    </lineage>
</organism>
<accession>Q1IHW4</accession>